<dbReference type="EMBL" id="CU928163">
    <property type="protein sequence ID" value="CAR12997.1"/>
    <property type="molecule type" value="Genomic_DNA"/>
</dbReference>
<dbReference type="RefSeq" id="YP_002412531.1">
    <property type="nucleotide sequence ID" value="NC_011751.1"/>
</dbReference>
<dbReference type="SMR" id="B7N4V3"/>
<dbReference type="STRING" id="585056.ECUMN_1796"/>
<dbReference type="KEGG" id="eum:ECUMN_1796"/>
<dbReference type="PATRIC" id="fig|585056.7.peg.1982"/>
<dbReference type="HOGENOM" id="CLU_001265_61_1_6"/>
<dbReference type="Proteomes" id="UP000007097">
    <property type="component" value="Chromosome"/>
</dbReference>
<dbReference type="GO" id="GO:0005886">
    <property type="term" value="C:plasma membrane"/>
    <property type="evidence" value="ECO:0007669"/>
    <property type="project" value="UniProtKB-SubCell"/>
</dbReference>
<dbReference type="GO" id="GO:0015144">
    <property type="term" value="F:carbohydrate transmembrane transporter activity"/>
    <property type="evidence" value="ECO:0007669"/>
    <property type="project" value="UniProtKB-UniRule"/>
</dbReference>
<dbReference type="CDD" id="cd17324">
    <property type="entry name" value="MFS_NepI_like"/>
    <property type="match status" value="1"/>
</dbReference>
<dbReference type="FunFam" id="1.20.1250.20:FF:000079">
    <property type="entry name" value="Probable sugar efflux transporter"/>
    <property type="match status" value="1"/>
</dbReference>
<dbReference type="Gene3D" id="1.20.1250.20">
    <property type="entry name" value="MFS general substrate transporter like domains"/>
    <property type="match status" value="1"/>
</dbReference>
<dbReference type="HAMAP" id="MF_00517">
    <property type="entry name" value="MFS_SotB"/>
    <property type="match status" value="1"/>
</dbReference>
<dbReference type="InterPro" id="IPR011701">
    <property type="entry name" value="MFS"/>
</dbReference>
<dbReference type="InterPro" id="IPR020846">
    <property type="entry name" value="MFS_dom"/>
</dbReference>
<dbReference type="InterPro" id="IPR050189">
    <property type="entry name" value="MFS_Efflux_Transporters"/>
</dbReference>
<dbReference type="InterPro" id="IPR036259">
    <property type="entry name" value="MFS_trans_sf"/>
</dbReference>
<dbReference type="InterPro" id="IPR023495">
    <property type="entry name" value="Sugar_effux_transptr_put"/>
</dbReference>
<dbReference type="NCBIfam" id="NF002921">
    <property type="entry name" value="PRK03545.1"/>
    <property type="match status" value="1"/>
</dbReference>
<dbReference type="PANTHER" id="PTHR43124">
    <property type="entry name" value="PURINE EFFLUX PUMP PBUE"/>
    <property type="match status" value="1"/>
</dbReference>
<dbReference type="PANTHER" id="PTHR43124:SF4">
    <property type="entry name" value="SUGAR EFFLUX TRANSPORTER"/>
    <property type="match status" value="1"/>
</dbReference>
<dbReference type="Pfam" id="PF07690">
    <property type="entry name" value="MFS_1"/>
    <property type="match status" value="1"/>
</dbReference>
<dbReference type="SUPFAM" id="SSF103473">
    <property type="entry name" value="MFS general substrate transporter"/>
    <property type="match status" value="1"/>
</dbReference>
<dbReference type="PROSITE" id="PS50850">
    <property type="entry name" value="MFS"/>
    <property type="match status" value="1"/>
</dbReference>
<organism>
    <name type="scientific">Escherichia coli O17:K52:H18 (strain UMN026 / ExPEC)</name>
    <dbReference type="NCBI Taxonomy" id="585056"/>
    <lineage>
        <taxon>Bacteria</taxon>
        <taxon>Pseudomonadati</taxon>
        <taxon>Pseudomonadota</taxon>
        <taxon>Gammaproteobacteria</taxon>
        <taxon>Enterobacterales</taxon>
        <taxon>Enterobacteriaceae</taxon>
        <taxon>Escherichia</taxon>
    </lineage>
</organism>
<evidence type="ECO:0000255" key="1">
    <source>
        <dbReference type="HAMAP-Rule" id="MF_00517"/>
    </source>
</evidence>
<keyword id="KW-0997">Cell inner membrane</keyword>
<keyword id="KW-1003">Cell membrane</keyword>
<keyword id="KW-0472">Membrane</keyword>
<keyword id="KW-0762">Sugar transport</keyword>
<keyword id="KW-0812">Transmembrane</keyword>
<keyword id="KW-1133">Transmembrane helix</keyword>
<keyword id="KW-0813">Transport</keyword>
<feature type="chain" id="PRO_1000127459" description="Probable sugar efflux transporter">
    <location>
        <begin position="1"/>
        <end position="396"/>
    </location>
</feature>
<feature type="transmembrane region" description="Helical" evidence="1">
    <location>
        <begin position="15"/>
        <end position="35"/>
    </location>
</feature>
<feature type="transmembrane region" description="Helical" evidence="1">
    <location>
        <begin position="50"/>
        <end position="70"/>
    </location>
</feature>
<feature type="transmembrane region" description="Helical" evidence="1">
    <location>
        <begin position="81"/>
        <end position="101"/>
    </location>
</feature>
<feature type="transmembrane region" description="Helical" evidence="1">
    <location>
        <begin position="103"/>
        <end position="123"/>
    </location>
</feature>
<feature type="transmembrane region" description="Helical" evidence="1">
    <location>
        <begin position="136"/>
        <end position="156"/>
    </location>
</feature>
<feature type="transmembrane region" description="Helical" evidence="1">
    <location>
        <begin position="170"/>
        <end position="190"/>
    </location>
</feature>
<feature type="transmembrane region" description="Helical" evidence="1">
    <location>
        <begin position="209"/>
        <end position="229"/>
    </location>
</feature>
<feature type="transmembrane region" description="Helical" evidence="1">
    <location>
        <begin position="246"/>
        <end position="266"/>
    </location>
</feature>
<feature type="transmembrane region" description="Helical" evidence="1">
    <location>
        <begin position="275"/>
        <end position="295"/>
    </location>
</feature>
<feature type="transmembrane region" description="Helical" evidence="1">
    <location>
        <begin position="299"/>
        <end position="319"/>
    </location>
</feature>
<feature type="transmembrane region" description="Helical" evidence="1">
    <location>
        <begin position="333"/>
        <end position="353"/>
    </location>
</feature>
<feature type="transmembrane region" description="Helical" evidence="1">
    <location>
        <begin position="364"/>
        <end position="384"/>
    </location>
</feature>
<protein>
    <recommendedName>
        <fullName evidence="1">Probable sugar efflux transporter</fullName>
    </recommendedName>
</protein>
<accession>B7N4V3</accession>
<gene>
    <name evidence="1" type="primary">sotB</name>
    <name type="ordered locus">ECUMN_1796</name>
</gene>
<sequence length="396" mass="42572">MTTNTVSRKVAWLRVVTLAVAAFIFNTTEFVPVGLLSDIAQSFHMQTAQVGIMLTIYAWVVALMSLPFMLMTSQVERRKLLICLFVVFIASHVLSFLSWSFTVLVISRIGVAFAHAIFWSITASLAIRMAPAGKRAQALSLIATGTALAMVLGLPLGRIVGQYFGWRMTFFAIGIGAFITLLCLIKLLPLLPSEHSGSLKSLPLLFRRPALMSIYLLTVVVVTAHYTAYSYIEPFVQNIAGFSANFATALLLLLGGAGIIGSVIFGKLGNQYASALVSTAIALLLVCLALLLPAANSEIHLGVLSIFWGIAMMIIGLGMQVKVLALAPDATDVAMALFSGIFNIGIGAGALVGNQVSLHWSMSMIGYVGAVPAFAALIWSIIIFRRWPVTLEEQTQ</sequence>
<name>SOTB_ECOLU</name>
<reference key="1">
    <citation type="journal article" date="2009" name="PLoS Genet.">
        <title>Organised genome dynamics in the Escherichia coli species results in highly diverse adaptive paths.</title>
        <authorList>
            <person name="Touchon M."/>
            <person name="Hoede C."/>
            <person name="Tenaillon O."/>
            <person name="Barbe V."/>
            <person name="Baeriswyl S."/>
            <person name="Bidet P."/>
            <person name="Bingen E."/>
            <person name="Bonacorsi S."/>
            <person name="Bouchier C."/>
            <person name="Bouvet O."/>
            <person name="Calteau A."/>
            <person name="Chiapello H."/>
            <person name="Clermont O."/>
            <person name="Cruveiller S."/>
            <person name="Danchin A."/>
            <person name="Diard M."/>
            <person name="Dossat C."/>
            <person name="Karoui M.E."/>
            <person name="Frapy E."/>
            <person name="Garry L."/>
            <person name="Ghigo J.M."/>
            <person name="Gilles A.M."/>
            <person name="Johnson J."/>
            <person name="Le Bouguenec C."/>
            <person name="Lescat M."/>
            <person name="Mangenot S."/>
            <person name="Martinez-Jehanne V."/>
            <person name="Matic I."/>
            <person name="Nassif X."/>
            <person name="Oztas S."/>
            <person name="Petit M.A."/>
            <person name="Pichon C."/>
            <person name="Rouy Z."/>
            <person name="Ruf C.S."/>
            <person name="Schneider D."/>
            <person name="Tourret J."/>
            <person name="Vacherie B."/>
            <person name="Vallenet D."/>
            <person name="Medigue C."/>
            <person name="Rocha E.P.C."/>
            <person name="Denamur E."/>
        </authorList>
    </citation>
    <scope>NUCLEOTIDE SEQUENCE [LARGE SCALE GENOMIC DNA]</scope>
    <source>
        <strain>UMN026 / ExPEC</strain>
    </source>
</reference>
<comment type="function">
    <text evidence="1">Involved in the efflux of sugars. The physiological role may be the reduction of the intracellular concentration of toxic sugars or sugar metabolites.</text>
</comment>
<comment type="subcellular location">
    <subcellularLocation>
        <location evidence="1">Cell inner membrane</location>
        <topology evidence="1">Multi-pass membrane protein</topology>
    </subcellularLocation>
</comment>
<comment type="similarity">
    <text evidence="1">Belongs to the major facilitator superfamily. SotB (TC 2.A.1.2) family.</text>
</comment>
<proteinExistence type="inferred from homology"/>